<comment type="function">
    <text evidence="3">Cotranslationally removes the N-terminal methionine from nascent proteins. The N-terminal methionine is often cleaved when the second residue in the primary sequence is small and uncharged (Met-Ala-, Cys, Gly, Pro, Ser, Thr, or Val).</text>
</comment>
<comment type="function">
    <text evidence="3">Protects eukaryotic initiation factor EIF2S1 from translation-inhibiting phosphorylation by inhibitory kinases such as EIF2AK2/PKR and EIF2AK1/HCR. Plays a critical role in the regulation of protein synthesis.</text>
</comment>
<comment type="catalytic activity">
    <reaction evidence="3">
        <text>Release of N-terminal amino acids, preferentially methionine, from peptides and arylamides.</text>
        <dbReference type="EC" id="3.4.11.18"/>
    </reaction>
</comment>
<comment type="cofactor">
    <cofactor evidence="3">
        <name>Co(2+)</name>
        <dbReference type="ChEBI" id="CHEBI:48828"/>
    </cofactor>
    <cofactor evidence="3">
        <name>Zn(2+)</name>
        <dbReference type="ChEBI" id="CHEBI:29105"/>
    </cofactor>
    <cofactor evidence="3">
        <name>Mn(2+)</name>
        <dbReference type="ChEBI" id="CHEBI:29035"/>
    </cofactor>
    <cofactor evidence="3">
        <name>Fe(2+)</name>
        <dbReference type="ChEBI" id="CHEBI:29033"/>
    </cofactor>
    <text evidence="3">Binds 2 divalent metal cations per subunit. Has a high-affinity and a low affinity metal-binding site. The true nature of the physiological cofactor is under debate. The enzyme is active with cobalt, zinc, manganese or divalent iron ions. Most likely, methionine aminopeptidases function as mononuclear Fe(2+)-metalloproteases under physiological conditions, and the catalytically relevant metal-binding site has been assigned to the histidine-containing high-affinity site.</text>
</comment>
<comment type="subunit">
    <text evidence="3">Binds EIF2S1 at low magnesium concentrations. Interacts strongly with the eIF-2 gamma-subunit EIF2S3.</text>
</comment>
<comment type="subcellular location">
    <subcellularLocation>
        <location>Cytoplasm</location>
    </subcellularLocation>
    <text evidence="3">About 30% of expressed METAP2 associates with polysomes.</text>
</comment>
<comment type="PTM">
    <text evidence="3">Contains approximately 12 O-linked N-acetylglucosamine (GlcNAc) residues. O-glycosylation is required for EIF2S1 binding.</text>
</comment>
<comment type="similarity">
    <text evidence="3">Belongs to the peptidase M24A family. Methionine aminopeptidase eukaryotic type 2 subfamily.</text>
</comment>
<dbReference type="EC" id="3.4.11.18" evidence="3"/>
<dbReference type="EMBL" id="BC102824">
    <property type="protein sequence ID" value="AAI02825.1"/>
    <property type="molecule type" value="mRNA"/>
</dbReference>
<dbReference type="RefSeq" id="NP_001035583.1">
    <property type="nucleotide sequence ID" value="NM_001040493.1"/>
</dbReference>
<dbReference type="SMR" id="Q3ZC89"/>
<dbReference type="FunCoup" id="Q3ZC89">
    <property type="interactions" value="3486"/>
</dbReference>
<dbReference type="STRING" id="9913.ENSBTAP00000026568"/>
<dbReference type="MEROPS" id="M24.002"/>
<dbReference type="GlyCosmos" id="Q3ZC89">
    <property type="glycosylation" value="1 site, No reported glycans"/>
</dbReference>
<dbReference type="GlyGen" id="Q3ZC89">
    <property type="glycosylation" value="1 site"/>
</dbReference>
<dbReference type="PaxDb" id="9913-ENSBTAP00000026568"/>
<dbReference type="PeptideAtlas" id="Q3ZC89"/>
<dbReference type="GeneID" id="404150"/>
<dbReference type="KEGG" id="bta:404150"/>
<dbReference type="CTD" id="10988"/>
<dbReference type="eggNOG" id="KOG2775">
    <property type="taxonomic scope" value="Eukaryota"/>
</dbReference>
<dbReference type="InParanoid" id="Q3ZC89"/>
<dbReference type="OrthoDB" id="7848262at2759"/>
<dbReference type="Proteomes" id="UP000009136">
    <property type="component" value="Unplaced"/>
</dbReference>
<dbReference type="GO" id="GO:0005737">
    <property type="term" value="C:cytoplasm"/>
    <property type="evidence" value="ECO:0000318"/>
    <property type="project" value="GO_Central"/>
</dbReference>
<dbReference type="GO" id="GO:0004177">
    <property type="term" value="F:aminopeptidase activity"/>
    <property type="evidence" value="ECO:0000318"/>
    <property type="project" value="GO_Central"/>
</dbReference>
<dbReference type="GO" id="GO:0004239">
    <property type="term" value="F:initiator methionyl aminopeptidase activity"/>
    <property type="evidence" value="ECO:0007669"/>
    <property type="project" value="UniProtKB-UniRule"/>
</dbReference>
<dbReference type="GO" id="GO:0046872">
    <property type="term" value="F:metal ion binding"/>
    <property type="evidence" value="ECO:0007669"/>
    <property type="project" value="UniProtKB-UniRule"/>
</dbReference>
<dbReference type="GO" id="GO:0070006">
    <property type="term" value="F:metalloaminopeptidase activity"/>
    <property type="evidence" value="ECO:0007669"/>
    <property type="project" value="UniProtKB-UniRule"/>
</dbReference>
<dbReference type="GO" id="GO:0008235">
    <property type="term" value="F:metalloexopeptidase activity"/>
    <property type="evidence" value="ECO:0000318"/>
    <property type="project" value="GO_Central"/>
</dbReference>
<dbReference type="GO" id="GO:0006508">
    <property type="term" value="P:proteolysis"/>
    <property type="evidence" value="ECO:0007669"/>
    <property type="project" value="UniProtKB-KW"/>
</dbReference>
<dbReference type="CDD" id="cd01088">
    <property type="entry name" value="MetAP2"/>
    <property type="match status" value="1"/>
</dbReference>
<dbReference type="FunFam" id="1.10.10.10:FF:000106">
    <property type="entry name" value="Methionine aminopeptidase 2"/>
    <property type="match status" value="1"/>
</dbReference>
<dbReference type="FunFam" id="3.90.230.10:FF:000003">
    <property type="entry name" value="Methionine aminopeptidase 2"/>
    <property type="match status" value="1"/>
</dbReference>
<dbReference type="Gene3D" id="3.90.230.10">
    <property type="entry name" value="Creatinase/methionine aminopeptidase superfamily"/>
    <property type="match status" value="1"/>
</dbReference>
<dbReference type="Gene3D" id="1.10.10.10">
    <property type="entry name" value="Winged helix-like DNA-binding domain superfamily/Winged helix DNA-binding domain"/>
    <property type="match status" value="1"/>
</dbReference>
<dbReference type="HAMAP" id="MF_03175">
    <property type="entry name" value="MetAP_2_euk"/>
    <property type="match status" value="1"/>
</dbReference>
<dbReference type="InterPro" id="IPR036005">
    <property type="entry name" value="Creatinase/aminopeptidase-like"/>
</dbReference>
<dbReference type="InterPro" id="IPR050247">
    <property type="entry name" value="Met_Aminopeptidase_Type2"/>
</dbReference>
<dbReference type="InterPro" id="IPR000994">
    <property type="entry name" value="Pept_M24"/>
</dbReference>
<dbReference type="InterPro" id="IPR001714">
    <property type="entry name" value="Pept_M24_MAP"/>
</dbReference>
<dbReference type="InterPro" id="IPR002468">
    <property type="entry name" value="Pept_M24A_MAP2"/>
</dbReference>
<dbReference type="InterPro" id="IPR018349">
    <property type="entry name" value="Pept_M24A_MAP2_BS"/>
</dbReference>
<dbReference type="InterPro" id="IPR036388">
    <property type="entry name" value="WH-like_DNA-bd_sf"/>
</dbReference>
<dbReference type="InterPro" id="IPR036390">
    <property type="entry name" value="WH_DNA-bd_sf"/>
</dbReference>
<dbReference type="NCBIfam" id="TIGR00501">
    <property type="entry name" value="met_pdase_II"/>
    <property type="match status" value="1"/>
</dbReference>
<dbReference type="PANTHER" id="PTHR45777">
    <property type="entry name" value="METHIONINE AMINOPEPTIDASE 2"/>
    <property type="match status" value="1"/>
</dbReference>
<dbReference type="PANTHER" id="PTHR45777:SF2">
    <property type="entry name" value="METHIONINE AMINOPEPTIDASE 2"/>
    <property type="match status" value="1"/>
</dbReference>
<dbReference type="Pfam" id="PF00557">
    <property type="entry name" value="Peptidase_M24"/>
    <property type="match status" value="1"/>
</dbReference>
<dbReference type="PRINTS" id="PR00599">
    <property type="entry name" value="MAPEPTIDASE"/>
</dbReference>
<dbReference type="SUPFAM" id="SSF55920">
    <property type="entry name" value="Creatinase/aminopeptidase"/>
    <property type="match status" value="1"/>
</dbReference>
<dbReference type="SUPFAM" id="SSF46785">
    <property type="entry name" value="Winged helix' DNA-binding domain"/>
    <property type="match status" value="1"/>
</dbReference>
<dbReference type="PROSITE" id="PS01202">
    <property type="entry name" value="MAP_2"/>
    <property type="match status" value="1"/>
</dbReference>
<sequence>MAGVEEAASCGSHLNGDLDPDEREEGAASTAEEAAKKKKRKKKKSKGAATGQQEPDKEAGASVDEVTRQLERQALEEKEKDDDDEDGDGDGDGATGKKKKKKKKKRGPKVQTDPPSVPICDLYPNGVFPKGQECEYPPTQDGRTAAWRTTSEEKKALDQASEEIWNDFREAAEAHRQVRKYVMSWIKPGMTMIEICEKMEDCSRKLIKENGLNAGLAFPTGCSLNNCAAHYTPNAGDTTVLQYDDICKIDFGTHISGRIIDCAFTVTFNPKYDTLLKAVKDATNTGIKCAGIDVRLCDVGEAIQEVMESYEVEIDGKTYQVKPIRNLNGHSIGPYRIHAGKTVPIVKGGEATRMEEGEVYAIETFGSTGKGVVHDDMECSHYMKNFDVGHVPIRLPRTKHLLNVINENFGTLAFCRRWLDRLGESKYLMALKNLCDLGIVDPYPPLCDIKGSYTAQFEHTILLRPTCKEVVSRGDDY</sequence>
<gene>
    <name evidence="3" type="primary">METAP2</name>
</gene>
<accession>Q3ZC89</accession>
<organism>
    <name type="scientific">Bos taurus</name>
    <name type="common">Bovine</name>
    <dbReference type="NCBI Taxonomy" id="9913"/>
    <lineage>
        <taxon>Eukaryota</taxon>
        <taxon>Metazoa</taxon>
        <taxon>Chordata</taxon>
        <taxon>Craniata</taxon>
        <taxon>Vertebrata</taxon>
        <taxon>Euteleostomi</taxon>
        <taxon>Mammalia</taxon>
        <taxon>Eutheria</taxon>
        <taxon>Laurasiatheria</taxon>
        <taxon>Artiodactyla</taxon>
        <taxon>Ruminantia</taxon>
        <taxon>Pecora</taxon>
        <taxon>Bovidae</taxon>
        <taxon>Bovinae</taxon>
        <taxon>Bos</taxon>
    </lineage>
</organism>
<proteinExistence type="evidence at transcript level"/>
<keyword id="KW-0007">Acetylation</keyword>
<keyword id="KW-0031">Aminopeptidase</keyword>
<keyword id="KW-0963">Cytoplasm</keyword>
<keyword id="KW-0325">Glycoprotein</keyword>
<keyword id="KW-0378">Hydrolase</keyword>
<keyword id="KW-0479">Metal-binding</keyword>
<keyword id="KW-0597">Phosphoprotein</keyword>
<keyword id="KW-0645">Protease</keyword>
<keyword id="KW-1185">Reference proteome</keyword>
<name>MAP2_BOVIN</name>
<feature type="initiator methionine" description="Removed" evidence="2">
    <location>
        <position position="1"/>
    </location>
</feature>
<feature type="chain" id="PRO_0000246091" description="Methionine aminopeptidase 2">
    <location>
        <begin position="2"/>
        <end position="477"/>
    </location>
</feature>
<feature type="region of interest" description="Disordered" evidence="4">
    <location>
        <begin position="1"/>
        <end position="121"/>
    </location>
</feature>
<feature type="compositionally biased region" description="Basic residues" evidence="4">
    <location>
        <begin position="36"/>
        <end position="46"/>
    </location>
</feature>
<feature type="compositionally biased region" description="Basic and acidic residues" evidence="4">
    <location>
        <begin position="54"/>
        <end position="78"/>
    </location>
</feature>
<feature type="compositionally biased region" description="Acidic residues" evidence="4">
    <location>
        <begin position="79"/>
        <end position="91"/>
    </location>
</feature>
<feature type="compositionally biased region" description="Basic residues" evidence="4">
    <location>
        <begin position="96"/>
        <end position="108"/>
    </location>
</feature>
<feature type="binding site" evidence="3">
    <location>
        <position position="230"/>
    </location>
    <ligand>
        <name>substrate</name>
    </ligand>
</feature>
<feature type="binding site" evidence="3">
    <location>
        <position position="250"/>
    </location>
    <ligand>
        <name>a divalent metal cation</name>
        <dbReference type="ChEBI" id="CHEBI:60240"/>
        <label>1</label>
    </ligand>
</feature>
<feature type="binding site" evidence="3">
    <location>
        <position position="261"/>
    </location>
    <ligand>
        <name>a divalent metal cation</name>
        <dbReference type="ChEBI" id="CHEBI:60240"/>
        <label>1</label>
    </ligand>
</feature>
<feature type="binding site" evidence="3">
    <location>
        <position position="261"/>
    </location>
    <ligand>
        <name>a divalent metal cation</name>
        <dbReference type="ChEBI" id="CHEBI:60240"/>
        <label>2</label>
        <note>catalytic</note>
    </ligand>
</feature>
<feature type="binding site" evidence="3">
    <location>
        <position position="330"/>
    </location>
    <ligand>
        <name>a divalent metal cation</name>
        <dbReference type="ChEBI" id="CHEBI:60240"/>
        <label>2</label>
        <note>catalytic</note>
    </ligand>
</feature>
<feature type="binding site" evidence="3">
    <location>
        <position position="338"/>
    </location>
    <ligand>
        <name>substrate</name>
    </ligand>
</feature>
<feature type="binding site" evidence="3">
    <location>
        <position position="363"/>
    </location>
    <ligand>
        <name>a divalent metal cation</name>
        <dbReference type="ChEBI" id="CHEBI:60240"/>
        <label>2</label>
        <note>catalytic</note>
    </ligand>
</feature>
<feature type="binding site" evidence="3">
    <location>
        <position position="458"/>
    </location>
    <ligand>
        <name>a divalent metal cation</name>
        <dbReference type="ChEBI" id="CHEBI:60240"/>
        <label>1</label>
    </ligand>
</feature>
<feature type="binding site" evidence="3">
    <location>
        <position position="458"/>
    </location>
    <ligand>
        <name>a divalent metal cation</name>
        <dbReference type="ChEBI" id="CHEBI:60240"/>
        <label>2</label>
        <note>catalytic</note>
    </ligand>
</feature>
<feature type="modified residue" description="N-acetylalanine" evidence="2">
    <location>
        <position position="2"/>
    </location>
</feature>
<feature type="modified residue" description="Phosphoserine" evidence="2">
    <location>
        <position position="45"/>
    </location>
</feature>
<feature type="modified residue" description="Phosphoserine; alternate" evidence="2">
    <location>
        <position position="62"/>
    </location>
</feature>
<feature type="glycosylation site" description="O-linked (GlcNAc) serine; alternate" evidence="1">
    <location>
        <position position="62"/>
    </location>
</feature>
<protein>
    <recommendedName>
        <fullName evidence="3">Methionine aminopeptidase 2</fullName>
        <shortName evidence="3">MAP 2</shortName>
        <shortName evidence="3">MetAP 2</shortName>
        <ecNumber evidence="3">3.4.11.18</ecNumber>
    </recommendedName>
    <alternativeName>
        <fullName evidence="3">Initiation factor 2-associated 67 kDa glycoprotein</fullName>
        <shortName evidence="3">p67</shortName>
        <shortName evidence="3">p67eIF2</shortName>
    </alternativeName>
    <alternativeName>
        <fullName evidence="3">Peptidase M</fullName>
    </alternativeName>
</protein>
<evidence type="ECO:0000250" key="1"/>
<evidence type="ECO:0000250" key="2">
    <source>
        <dbReference type="UniProtKB" id="P50579"/>
    </source>
</evidence>
<evidence type="ECO:0000255" key="3">
    <source>
        <dbReference type="HAMAP-Rule" id="MF_03175"/>
    </source>
</evidence>
<evidence type="ECO:0000256" key="4">
    <source>
        <dbReference type="SAM" id="MobiDB-lite"/>
    </source>
</evidence>
<reference key="1">
    <citation type="submission" date="2005-08" db="EMBL/GenBank/DDBJ databases">
        <authorList>
            <consortium name="NIH - Mammalian Gene Collection (MGC) project"/>
        </authorList>
    </citation>
    <scope>NUCLEOTIDE SEQUENCE [LARGE SCALE MRNA]</scope>
    <source>
        <strain>Crossbred X Angus</strain>
        <tissue>Ileum</tissue>
    </source>
</reference>